<sequence>MQWLADYWWIILILLVGMILNGIKELRRLDHKRFLDNKPELPPHRDNNAQWDDEDDWPDQNKKK</sequence>
<feature type="chain" id="PRO_1000069091" description="UPF0370 protein YPDSF_2160">
    <location>
        <begin position="1"/>
        <end position="64"/>
    </location>
</feature>
<feature type="transmembrane region" description="Helical" evidence="1">
    <location>
        <begin position="3"/>
        <end position="23"/>
    </location>
</feature>
<feature type="region of interest" description="Disordered" evidence="2">
    <location>
        <begin position="36"/>
        <end position="64"/>
    </location>
</feature>
<feature type="compositionally biased region" description="Basic and acidic residues" evidence="2">
    <location>
        <begin position="36"/>
        <end position="47"/>
    </location>
</feature>
<accession>A4TMM5</accession>
<comment type="subcellular location">
    <subcellularLocation>
        <location evidence="1">Cell membrane</location>
        <topology evidence="1">Single-pass membrane protein</topology>
    </subcellularLocation>
</comment>
<comment type="similarity">
    <text evidence="1">Belongs to the UPF0370 family.</text>
</comment>
<name>Y2160_YERPP</name>
<gene>
    <name type="ordered locus">YPDSF_2160</name>
</gene>
<reference key="1">
    <citation type="submission" date="2007-02" db="EMBL/GenBank/DDBJ databases">
        <title>Complete sequence of chromosome of Yersinia pestis Pestoides F.</title>
        <authorList>
            <consortium name="US DOE Joint Genome Institute"/>
            <person name="Copeland A."/>
            <person name="Lucas S."/>
            <person name="Lapidus A."/>
            <person name="Barry K."/>
            <person name="Detter J.C."/>
            <person name="Glavina del Rio T."/>
            <person name="Hammon N."/>
            <person name="Israni S."/>
            <person name="Dalin E."/>
            <person name="Tice H."/>
            <person name="Pitluck S."/>
            <person name="Di Bartolo G."/>
            <person name="Chain P."/>
            <person name="Malfatti S."/>
            <person name="Shin M."/>
            <person name="Vergez L."/>
            <person name="Schmutz J."/>
            <person name="Larimer F."/>
            <person name="Land M."/>
            <person name="Hauser L."/>
            <person name="Worsham P."/>
            <person name="Chu M."/>
            <person name="Bearden S."/>
            <person name="Garcia E."/>
            <person name="Richardson P."/>
        </authorList>
    </citation>
    <scope>NUCLEOTIDE SEQUENCE [LARGE SCALE GENOMIC DNA]</scope>
    <source>
        <strain>Pestoides F</strain>
    </source>
</reference>
<organism>
    <name type="scientific">Yersinia pestis (strain Pestoides F)</name>
    <dbReference type="NCBI Taxonomy" id="386656"/>
    <lineage>
        <taxon>Bacteria</taxon>
        <taxon>Pseudomonadati</taxon>
        <taxon>Pseudomonadota</taxon>
        <taxon>Gammaproteobacteria</taxon>
        <taxon>Enterobacterales</taxon>
        <taxon>Yersiniaceae</taxon>
        <taxon>Yersinia</taxon>
    </lineage>
</organism>
<protein>
    <recommendedName>
        <fullName evidence="1">UPF0370 protein YPDSF_2160</fullName>
    </recommendedName>
</protein>
<dbReference type="EMBL" id="CP000668">
    <property type="protein sequence ID" value="ABP40537.1"/>
    <property type="molecule type" value="Genomic_DNA"/>
</dbReference>
<dbReference type="RefSeq" id="WP_002208551.1">
    <property type="nucleotide sequence ID" value="NZ_CP009715.1"/>
</dbReference>
<dbReference type="SMR" id="A4TMM5"/>
<dbReference type="KEGG" id="ypp:YPDSF_2160"/>
<dbReference type="PATRIC" id="fig|386656.14.peg.3639"/>
<dbReference type="GO" id="GO:0005886">
    <property type="term" value="C:plasma membrane"/>
    <property type="evidence" value="ECO:0007669"/>
    <property type="project" value="UniProtKB-SubCell"/>
</dbReference>
<dbReference type="HAMAP" id="MF_01566">
    <property type="entry name" value="UPF0370"/>
    <property type="match status" value="1"/>
</dbReference>
<dbReference type="InterPro" id="IPR020910">
    <property type="entry name" value="UPF0370"/>
</dbReference>
<dbReference type="NCBIfam" id="NF010185">
    <property type="entry name" value="PRK13664.1"/>
    <property type="match status" value="1"/>
</dbReference>
<dbReference type="Pfam" id="PF13980">
    <property type="entry name" value="UPF0370"/>
    <property type="match status" value="1"/>
</dbReference>
<proteinExistence type="inferred from homology"/>
<keyword id="KW-1003">Cell membrane</keyword>
<keyword id="KW-0472">Membrane</keyword>
<keyword id="KW-0812">Transmembrane</keyword>
<keyword id="KW-1133">Transmembrane helix</keyword>
<evidence type="ECO:0000255" key="1">
    <source>
        <dbReference type="HAMAP-Rule" id="MF_01566"/>
    </source>
</evidence>
<evidence type="ECO:0000256" key="2">
    <source>
        <dbReference type="SAM" id="MobiDB-lite"/>
    </source>
</evidence>